<comment type="function">
    <text evidence="1">Necessary for the succinyl substitution of periplasmic glucans. Could catalyze the transfer of succinyl residues from the cytoplasmic side of the membrane to the nascent glucan backbones on the periplasmic side of the membrane.</text>
</comment>
<comment type="pathway">
    <text evidence="1">Glycan metabolism; osmoregulated periplasmic glucan (OPG) biosynthesis.</text>
</comment>
<comment type="subcellular location">
    <subcellularLocation>
        <location evidence="1">Cell membrane</location>
        <topology evidence="1">Multi-pass membrane protein</topology>
    </subcellularLocation>
</comment>
<comment type="similarity">
    <text evidence="1">Belongs to the acyltransferase 3 family. OpgC subfamily.</text>
</comment>
<accession>C0Q859</accession>
<feature type="chain" id="PRO_1000149738" description="Glucans biosynthesis protein C">
    <location>
        <begin position="1"/>
        <end position="384"/>
    </location>
</feature>
<feature type="transmembrane region" description="Helical" evidence="1">
    <location>
        <begin position="17"/>
        <end position="37"/>
    </location>
</feature>
<feature type="transmembrane region" description="Helical" evidence="1">
    <location>
        <begin position="54"/>
        <end position="74"/>
    </location>
</feature>
<feature type="transmembrane region" description="Helical" evidence="1">
    <location>
        <begin position="91"/>
        <end position="111"/>
    </location>
</feature>
<feature type="transmembrane region" description="Helical" evidence="1">
    <location>
        <begin position="140"/>
        <end position="160"/>
    </location>
</feature>
<feature type="transmembrane region" description="Helical" evidence="1">
    <location>
        <begin position="173"/>
        <end position="193"/>
    </location>
</feature>
<feature type="transmembrane region" description="Helical" evidence="1">
    <location>
        <begin position="212"/>
        <end position="232"/>
    </location>
</feature>
<feature type="transmembrane region" description="Helical" evidence="1">
    <location>
        <begin position="240"/>
        <end position="260"/>
    </location>
</feature>
<feature type="transmembrane region" description="Helical" evidence="1">
    <location>
        <begin position="274"/>
        <end position="294"/>
    </location>
</feature>
<feature type="transmembrane region" description="Helical" evidence="1">
    <location>
        <begin position="311"/>
        <end position="331"/>
    </location>
</feature>
<feature type="transmembrane region" description="Helical" evidence="1">
    <location>
        <begin position="338"/>
        <end position="358"/>
    </location>
</feature>
<organism>
    <name type="scientific">Salmonella paratyphi C (strain RKS4594)</name>
    <dbReference type="NCBI Taxonomy" id="476213"/>
    <lineage>
        <taxon>Bacteria</taxon>
        <taxon>Pseudomonadati</taxon>
        <taxon>Pseudomonadota</taxon>
        <taxon>Gammaproteobacteria</taxon>
        <taxon>Enterobacterales</taxon>
        <taxon>Enterobacteriaceae</taxon>
        <taxon>Salmonella</taxon>
    </lineage>
</organism>
<dbReference type="EC" id="2.1.-.-" evidence="1"/>
<dbReference type="EMBL" id="CP000857">
    <property type="protein sequence ID" value="ACN46704.1"/>
    <property type="molecule type" value="Genomic_DNA"/>
</dbReference>
<dbReference type="RefSeq" id="WP_000100071.1">
    <property type="nucleotide sequence ID" value="NC_012125.1"/>
</dbReference>
<dbReference type="KEGG" id="sei:SPC_2601"/>
<dbReference type="HOGENOM" id="CLU_036182_2_0_6"/>
<dbReference type="UniPathway" id="UPA00637"/>
<dbReference type="Proteomes" id="UP000001599">
    <property type="component" value="Chromosome"/>
</dbReference>
<dbReference type="GO" id="GO:0005886">
    <property type="term" value="C:plasma membrane"/>
    <property type="evidence" value="ECO:0007669"/>
    <property type="project" value="UniProtKB-SubCell"/>
</dbReference>
<dbReference type="GO" id="GO:0016747">
    <property type="term" value="F:acyltransferase activity, transferring groups other than amino-acyl groups"/>
    <property type="evidence" value="ECO:0007669"/>
    <property type="project" value="InterPro"/>
</dbReference>
<dbReference type="GO" id="GO:0016741">
    <property type="term" value="F:transferase activity, transferring one-carbon groups"/>
    <property type="evidence" value="ECO:0007669"/>
    <property type="project" value="UniProtKB-UniRule"/>
</dbReference>
<dbReference type="GO" id="GO:0009250">
    <property type="term" value="P:glucan biosynthetic process"/>
    <property type="evidence" value="ECO:0007669"/>
    <property type="project" value="UniProtKB-UniRule"/>
</dbReference>
<dbReference type="HAMAP" id="MF_01066">
    <property type="entry name" value="MdoC_OpgC"/>
    <property type="match status" value="1"/>
</dbReference>
<dbReference type="InterPro" id="IPR002656">
    <property type="entry name" value="Acyl_transf_3_dom"/>
</dbReference>
<dbReference type="InterPro" id="IPR050623">
    <property type="entry name" value="Glucan_succinyl_AcylTrfase"/>
</dbReference>
<dbReference type="InterPro" id="IPR023723">
    <property type="entry name" value="Glucans_biosynth_C"/>
</dbReference>
<dbReference type="NCBIfam" id="NF003014">
    <property type="entry name" value="PRK03854.1"/>
    <property type="match status" value="1"/>
</dbReference>
<dbReference type="PANTHER" id="PTHR36927">
    <property type="entry name" value="BLR4337 PROTEIN"/>
    <property type="match status" value="1"/>
</dbReference>
<dbReference type="PANTHER" id="PTHR36927:SF3">
    <property type="entry name" value="GLUCANS BIOSYNTHESIS PROTEIN C"/>
    <property type="match status" value="1"/>
</dbReference>
<dbReference type="Pfam" id="PF01757">
    <property type="entry name" value="Acyl_transf_3"/>
    <property type="match status" value="1"/>
</dbReference>
<reference key="1">
    <citation type="journal article" date="2009" name="PLoS ONE">
        <title>Salmonella paratyphi C: genetic divergence from Salmonella choleraesuis and pathogenic convergence with Salmonella typhi.</title>
        <authorList>
            <person name="Liu W.-Q."/>
            <person name="Feng Y."/>
            <person name="Wang Y."/>
            <person name="Zou Q.-H."/>
            <person name="Chen F."/>
            <person name="Guo J.-T."/>
            <person name="Peng Y.-H."/>
            <person name="Jin Y."/>
            <person name="Li Y.-G."/>
            <person name="Hu S.-N."/>
            <person name="Johnston R.N."/>
            <person name="Liu G.-R."/>
            <person name="Liu S.-L."/>
        </authorList>
    </citation>
    <scope>NUCLEOTIDE SEQUENCE [LARGE SCALE GENOMIC DNA]</scope>
    <source>
        <strain>RKS4594</strain>
    </source>
</reference>
<proteinExistence type="inferred from homology"/>
<keyword id="KW-0012">Acyltransferase</keyword>
<keyword id="KW-1003">Cell membrane</keyword>
<keyword id="KW-0472">Membrane</keyword>
<keyword id="KW-0808">Transferase</keyword>
<keyword id="KW-0812">Transmembrane</keyword>
<keyword id="KW-1133">Transmembrane helix</keyword>
<evidence type="ECO:0000255" key="1">
    <source>
        <dbReference type="HAMAP-Rule" id="MF_01066"/>
    </source>
</evidence>
<sequence>MSSVPAPREYFLDSIRAWLMLLGIPFHISLIYSTHSWHVNSATPSWWLTLFNDFIHAFRMQVFFVISGYFSYMLFLRYPLKRWWKVRVERVGIPMLTAIPLLTLPQFILLQYVKEKTENWPTLSAYEKYNTLAWELISHLWFLLVLVILTTVSIGIFTWFQKRQETSKPRPAAISLVRLSLIFFLLGMAYAAIRRIIFIVYPAILSDGMFNFIVMQTLFYVPFFILGALAFIHPDLKARFTTPSRGCTLGAAVAFIAYLLNQRYGSGDAWMYETESVITMVMGLWMVNVVFSLGHRLLNFQSARVTYFVNASLFIYLVHHPLTLFFGAYITPHISSNLIGFLCGLIFVMGIALILYEIHLRIPLLKFLFSGKPPVKQESRAAIG</sequence>
<gene>
    <name evidence="1" type="primary">mdoC</name>
    <name evidence="1" type="synonym">opgC</name>
    <name type="ordered locus">SPC_2601</name>
</gene>
<protein>
    <recommendedName>
        <fullName evidence="1">Glucans biosynthesis protein C</fullName>
        <ecNumber evidence="1">2.1.-.-</ecNumber>
    </recommendedName>
</protein>
<name>OPGC_SALPC</name>